<accession>P36154</accession>
<accession>D6VXD4</accession>
<accession>Q6Q573</accession>
<proteinExistence type="evidence at protein level"/>
<sequence>MNSTKRLKMSTTFHDYDLEEPLTSNARPLKNSVITIRVIKSFPYRNVKNIVLHDYDLADKTAKDLFNDVLNKIQNEGSFRPFRNVKFDTLKIYTHAHGSKTVNLVINFDHDDDWTLDIENDKKKLFEYGIENETEISLFNKEDYLRFKENPEEKW</sequence>
<name>AIM29_YEAST</name>
<comment type="function">
    <text>May be involved in mitochondrial organization and biogenesis.</text>
</comment>
<comment type="subcellular location">
    <subcellularLocation>
        <location evidence="1">Cytoplasm</location>
    </subcellularLocation>
</comment>
<comment type="miscellaneous">
    <text evidence="2">Present with 1230 molecules/cell in log phase SD medium.</text>
</comment>
<comment type="similarity">
    <text evidence="3">Belongs to the UPF0538 family.</text>
</comment>
<comment type="sequence caution" evidence="3">
    <conflict type="frameshift">
        <sequence resource="EMBL-CDS" id="AAA79999"/>
    </conflict>
</comment>
<gene>
    <name type="primary">AIM29</name>
    <name type="ordered locus">YKR074W</name>
</gene>
<protein>
    <recommendedName>
        <fullName>Altered inheritance rate of mitochondria protein 29</fullName>
    </recommendedName>
</protein>
<feature type="chain" id="PRO_0000203221" description="Altered inheritance rate of mitochondria protein 29">
    <location>
        <begin position="1"/>
        <end position="155"/>
    </location>
</feature>
<feature type="modified residue" description="Phosphoserine" evidence="4">
    <location>
        <position position="78"/>
    </location>
</feature>
<feature type="sequence conflict" description="In Ref. 4; AAS56722." evidence="3" ref="4">
    <original>E</original>
    <variation>G</variation>
    <location>
        <position position="153"/>
    </location>
</feature>
<reference key="1">
    <citation type="journal article" date="1995" name="Genetics">
        <title>Overexpression of SIS2, which contains an extremely acidic region, increases the expression of SWI4, CLN1 and CLN2 in sit4 mutants.</title>
        <authorList>
            <person name="di Como C.J."/>
            <person name="Bose R."/>
            <person name="Arndt K.T."/>
        </authorList>
    </citation>
    <scope>NUCLEOTIDE SEQUENCE [GENOMIC DNA]</scope>
</reference>
<reference key="2">
    <citation type="journal article" date="1994" name="Nature">
        <title>Complete DNA sequence of yeast chromosome XI.</title>
        <authorList>
            <person name="Dujon B."/>
            <person name="Alexandraki D."/>
            <person name="Andre B."/>
            <person name="Ansorge W."/>
            <person name="Baladron V."/>
            <person name="Ballesta J.P.G."/>
            <person name="Banrevi A."/>
            <person name="Bolle P.-A."/>
            <person name="Bolotin-Fukuhara M."/>
            <person name="Bossier P."/>
            <person name="Bou G."/>
            <person name="Boyer J."/>
            <person name="Buitrago M.J."/>
            <person name="Cheret G."/>
            <person name="Colleaux L."/>
            <person name="Daignan-Fornier B."/>
            <person name="del Rey F."/>
            <person name="Dion C."/>
            <person name="Domdey H."/>
            <person name="Duesterhoeft A."/>
            <person name="Duesterhus S."/>
            <person name="Entian K.-D."/>
            <person name="Erfle H."/>
            <person name="Esteban P.F."/>
            <person name="Feldmann H."/>
            <person name="Fernandes L."/>
            <person name="Fobo G.M."/>
            <person name="Fritz C."/>
            <person name="Fukuhara H."/>
            <person name="Gabel C."/>
            <person name="Gaillon L."/>
            <person name="Garcia-Cantalejo J.M."/>
            <person name="Garcia-Ramirez J.J."/>
            <person name="Gent M.E."/>
            <person name="Ghazvini M."/>
            <person name="Goffeau A."/>
            <person name="Gonzalez A."/>
            <person name="Grothues D."/>
            <person name="Guerreiro P."/>
            <person name="Hegemann J.H."/>
            <person name="Hewitt N."/>
            <person name="Hilger F."/>
            <person name="Hollenberg C.P."/>
            <person name="Horaitis O."/>
            <person name="Indge K.J."/>
            <person name="Jacquier A."/>
            <person name="James C.M."/>
            <person name="Jauniaux J.-C."/>
            <person name="Jimenez A."/>
            <person name="Keuchel H."/>
            <person name="Kirchrath L."/>
            <person name="Kleine K."/>
            <person name="Koetter P."/>
            <person name="Legrain P."/>
            <person name="Liebl S."/>
            <person name="Louis E.J."/>
            <person name="Maia e Silva A."/>
            <person name="Marck C."/>
            <person name="Monnier A.-L."/>
            <person name="Moestl D."/>
            <person name="Mueller S."/>
            <person name="Obermaier B."/>
            <person name="Oliver S.G."/>
            <person name="Pallier C."/>
            <person name="Pascolo S."/>
            <person name="Pfeiffer F."/>
            <person name="Philippsen P."/>
            <person name="Planta R.J."/>
            <person name="Pohl F.M."/>
            <person name="Pohl T.M."/>
            <person name="Poehlmann R."/>
            <person name="Portetelle D."/>
            <person name="Purnelle B."/>
            <person name="Puzos V."/>
            <person name="Ramezani Rad M."/>
            <person name="Rasmussen S.W."/>
            <person name="Remacha M.A."/>
            <person name="Revuelta J.L."/>
            <person name="Richard G.-F."/>
            <person name="Rieger M."/>
            <person name="Rodrigues-Pousada C."/>
            <person name="Rose M."/>
            <person name="Rupp T."/>
            <person name="Santos M.A."/>
            <person name="Schwager C."/>
            <person name="Sensen C."/>
            <person name="Skala J."/>
            <person name="Soares H."/>
            <person name="Sor F."/>
            <person name="Stegemann J."/>
            <person name="Tettelin H."/>
            <person name="Thierry A."/>
            <person name="Tzermia M."/>
            <person name="Urrestarazu L.A."/>
            <person name="van Dyck L."/>
            <person name="van Vliet-Reedijk J.C."/>
            <person name="Valens M."/>
            <person name="Vandenbol M."/>
            <person name="Vilela C."/>
            <person name="Vissers S."/>
            <person name="von Wettstein D."/>
            <person name="Voss H."/>
            <person name="Wiemann S."/>
            <person name="Xu G."/>
            <person name="Zimmermann J."/>
            <person name="Haasemann M."/>
            <person name="Becker I."/>
            <person name="Mewes H.-W."/>
        </authorList>
    </citation>
    <scope>NUCLEOTIDE SEQUENCE [LARGE SCALE GENOMIC DNA]</scope>
    <source>
        <strain>ATCC 204508 / S288c</strain>
    </source>
</reference>
<reference key="3">
    <citation type="journal article" date="2014" name="G3 (Bethesda)">
        <title>The reference genome sequence of Saccharomyces cerevisiae: Then and now.</title>
        <authorList>
            <person name="Engel S.R."/>
            <person name="Dietrich F.S."/>
            <person name="Fisk D.G."/>
            <person name="Binkley G."/>
            <person name="Balakrishnan R."/>
            <person name="Costanzo M.C."/>
            <person name="Dwight S.S."/>
            <person name="Hitz B.C."/>
            <person name="Karra K."/>
            <person name="Nash R.S."/>
            <person name="Weng S."/>
            <person name="Wong E.D."/>
            <person name="Lloyd P."/>
            <person name="Skrzypek M.S."/>
            <person name="Miyasato S.R."/>
            <person name="Simison M."/>
            <person name="Cherry J.M."/>
        </authorList>
    </citation>
    <scope>GENOME REANNOTATION</scope>
    <source>
        <strain>ATCC 204508 / S288c</strain>
    </source>
</reference>
<reference key="4">
    <citation type="journal article" date="2007" name="Genome Res.">
        <title>Approaching a complete repository of sequence-verified protein-encoding clones for Saccharomyces cerevisiae.</title>
        <authorList>
            <person name="Hu Y."/>
            <person name="Rolfs A."/>
            <person name="Bhullar B."/>
            <person name="Murthy T.V.S."/>
            <person name="Zhu C."/>
            <person name="Berger M.F."/>
            <person name="Camargo A.A."/>
            <person name="Kelley F."/>
            <person name="McCarron S."/>
            <person name="Jepson D."/>
            <person name="Richardson A."/>
            <person name="Raphael J."/>
            <person name="Moreira D."/>
            <person name="Taycher E."/>
            <person name="Zuo D."/>
            <person name="Mohr S."/>
            <person name="Kane M.F."/>
            <person name="Williamson J."/>
            <person name="Simpson A.J.G."/>
            <person name="Bulyk M.L."/>
            <person name="Harlow E."/>
            <person name="Marsischky G."/>
            <person name="Kolodner R.D."/>
            <person name="LaBaer J."/>
        </authorList>
    </citation>
    <scope>NUCLEOTIDE SEQUENCE [GENOMIC DNA]</scope>
    <source>
        <strain>ATCC 204508 / S288c</strain>
    </source>
</reference>
<reference key="5">
    <citation type="journal article" date="2002" name="Genes Dev.">
        <title>Subcellular localization of the yeast proteome.</title>
        <authorList>
            <person name="Kumar A."/>
            <person name="Agarwal S."/>
            <person name="Heyman J.A."/>
            <person name="Matson S."/>
            <person name="Heidtman M."/>
            <person name="Piccirillo S."/>
            <person name="Umansky L."/>
            <person name="Drawid A."/>
            <person name="Jansen R."/>
            <person name="Liu Y."/>
            <person name="Cheung K.-H."/>
            <person name="Miller P."/>
            <person name="Gerstein M."/>
            <person name="Roeder G.S."/>
            <person name="Snyder M."/>
        </authorList>
    </citation>
    <scope>SUBCELLULAR LOCATION</scope>
</reference>
<reference key="6">
    <citation type="journal article" date="2003" name="Nature">
        <title>Global analysis of protein expression in yeast.</title>
        <authorList>
            <person name="Ghaemmaghami S."/>
            <person name="Huh W.-K."/>
            <person name="Bower K."/>
            <person name="Howson R.W."/>
            <person name="Belle A."/>
            <person name="Dephoure N."/>
            <person name="O'Shea E.K."/>
            <person name="Weissman J.S."/>
        </authorList>
    </citation>
    <scope>LEVEL OF PROTEIN EXPRESSION [LARGE SCALE ANALYSIS]</scope>
</reference>
<reference key="7">
    <citation type="journal article" date="2008" name="Mol. Cell. Proteomics">
        <title>A multidimensional chromatography technology for in-depth phosphoproteome analysis.</title>
        <authorList>
            <person name="Albuquerque C.P."/>
            <person name="Smolka M.B."/>
            <person name="Payne S.H."/>
            <person name="Bafna V."/>
            <person name="Eng J."/>
            <person name="Zhou H."/>
        </authorList>
    </citation>
    <scope>PHOSPHORYLATION [LARGE SCALE ANALYSIS] AT SER-78</scope>
    <scope>IDENTIFICATION BY MASS SPECTROMETRY [LARGE SCALE ANALYSIS]</scope>
</reference>
<reference key="8">
    <citation type="journal article" date="2009" name="PLoS Genet.">
        <title>Computationally driven, quantitative experiments discover genes required for mitochondrial biogenesis.</title>
        <authorList>
            <person name="Hess D.C."/>
            <person name="Myers C.L."/>
            <person name="Huttenhower C."/>
            <person name="Hibbs M.A."/>
            <person name="Hayes A.P."/>
            <person name="Paw J."/>
            <person name="Clore J.J."/>
            <person name="Mendoza R.M."/>
            <person name="Luis B.S."/>
            <person name="Nislow C."/>
            <person name="Giaever G."/>
            <person name="Costanzo M."/>
            <person name="Troyanskaya O.G."/>
            <person name="Caudy A.A."/>
        </authorList>
    </citation>
    <scope>PREDICTION OF FUNCTION</scope>
</reference>
<reference key="9">
    <citation type="journal article" date="2009" name="Science">
        <title>Global analysis of Cdk1 substrate phosphorylation sites provides insights into evolution.</title>
        <authorList>
            <person name="Holt L.J."/>
            <person name="Tuch B.B."/>
            <person name="Villen J."/>
            <person name="Johnson A.D."/>
            <person name="Gygi S.P."/>
            <person name="Morgan D.O."/>
        </authorList>
    </citation>
    <scope>IDENTIFICATION BY MASS SPECTROMETRY [LARGE SCALE ANALYSIS]</scope>
</reference>
<organism>
    <name type="scientific">Saccharomyces cerevisiae (strain ATCC 204508 / S288c)</name>
    <name type="common">Baker's yeast</name>
    <dbReference type="NCBI Taxonomy" id="559292"/>
    <lineage>
        <taxon>Eukaryota</taxon>
        <taxon>Fungi</taxon>
        <taxon>Dikarya</taxon>
        <taxon>Ascomycota</taxon>
        <taxon>Saccharomycotina</taxon>
        <taxon>Saccharomycetes</taxon>
        <taxon>Saccharomycetales</taxon>
        <taxon>Saccharomycetaceae</taxon>
        <taxon>Saccharomyces</taxon>
    </lineage>
</organism>
<evidence type="ECO:0000269" key="1">
    <source>
    </source>
</evidence>
<evidence type="ECO:0000269" key="2">
    <source>
    </source>
</evidence>
<evidence type="ECO:0000305" key="3"/>
<evidence type="ECO:0007744" key="4">
    <source>
    </source>
</evidence>
<dbReference type="EMBL" id="U01878">
    <property type="protein sequence ID" value="AAA79999.1"/>
    <property type="status" value="ALT_FRAME"/>
    <property type="molecule type" value="Genomic_DNA"/>
</dbReference>
<dbReference type="EMBL" id="Z28299">
    <property type="protein sequence ID" value="CAA82153.1"/>
    <property type="molecule type" value="Genomic_DNA"/>
</dbReference>
<dbReference type="EMBL" id="AY558396">
    <property type="protein sequence ID" value="AAS56722.1"/>
    <property type="molecule type" value="Genomic_DNA"/>
</dbReference>
<dbReference type="EMBL" id="BK006944">
    <property type="protein sequence ID" value="DAA09224.1"/>
    <property type="molecule type" value="Genomic_DNA"/>
</dbReference>
<dbReference type="PIR" id="S38151">
    <property type="entry name" value="S38151"/>
</dbReference>
<dbReference type="RefSeq" id="NP_013000.3">
    <property type="nucleotide sequence ID" value="NM_001179864.3"/>
</dbReference>
<dbReference type="BioGRID" id="34205">
    <property type="interactions" value="104"/>
</dbReference>
<dbReference type="DIP" id="DIP-4631N"/>
<dbReference type="FunCoup" id="P36154">
    <property type="interactions" value="83"/>
</dbReference>
<dbReference type="STRING" id="4932.YKR074W"/>
<dbReference type="iPTMnet" id="P36154"/>
<dbReference type="PaxDb" id="4932-YKR074W"/>
<dbReference type="PeptideAtlas" id="P36154"/>
<dbReference type="EnsemblFungi" id="YKR074W_mRNA">
    <property type="protein sequence ID" value="YKR074W"/>
    <property type="gene ID" value="YKR074W"/>
</dbReference>
<dbReference type="GeneID" id="853949"/>
<dbReference type="KEGG" id="sce:YKR074W"/>
<dbReference type="AGR" id="SGD:S000001782"/>
<dbReference type="SGD" id="S000001782">
    <property type="gene designation" value="AIM29"/>
</dbReference>
<dbReference type="VEuPathDB" id="FungiDB:YKR074W"/>
<dbReference type="eggNOG" id="KOG4147">
    <property type="taxonomic scope" value="Eukaryota"/>
</dbReference>
<dbReference type="GeneTree" id="ENSGT00390000015352"/>
<dbReference type="HOGENOM" id="CLU_117792_0_0_1"/>
<dbReference type="InParanoid" id="P36154"/>
<dbReference type="OMA" id="YRNVKNH"/>
<dbReference type="OrthoDB" id="937at2759"/>
<dbReference type="BioCyc" id="YEAST:G3O-32038-MONOMER"/>
<dbReference type="BioGRID-ORCS" id="853949">
    <property type="hits" value="0 hits in 10 CRISPR screens"/>
</dbReference>
<dbReference type="PRO" id="PR:P36154"/>
<dbReference type="Proteomes" id="UP000002311">
    <property type="component" value="Chromosome XI"/>
</dbReference>
<dbReference type="RNAct" id="P36154">
    <property type="molecule type" value="protein"/>
</dbReference>
<dbReference type="GO" id="GO:0005737">
    <property type="term" value="C:cytoplasm"/>
    <property type="evidence" value="ECO:0007005"/>
    <property type="project" value="SGD"/>
</dbReference>
<dbReference type="InterPro" id="IPR018794">
    <property type="entry name" value="UPF0538"/>
</dbReference>
<dbReference type="PANTHER" id="PTHR18444">
    <property type="entry name" value="UPF0538 FAMILY MEMBER"/>
    <property type="match status" value="1"/>
</dbReference>
<dbReference type="PANTHER" id="PTHR18444:SF9">
    <property type="entry name" value="UPF0538 PROTEIN C2ORF76"/>
    <property type="match status" value="1"/>
</dbReference>
<dbReference type="Pfam" id="PF10209">
    <property type="entry name" value="DUF2340"/>
    <property type="match status" value="1"/>
</dbReference>
<keyword id="KW-0963">Cytoplasm</keyword>
<keyword id="KW-0597">Phosphoprotein</keyword>
<keyword id="KW-1185">Reference proteome</keyword>